<proteinExistence type="inferred from homology"/>
<protein>
    <recommendedName>
        <fullName evidence="2">Glyceraldehyde-3-phosphate dehydrogenase 2</fullName>
        <shortName evidence="2">GAPDH 2</shortName>
        <ecNumber evidence="2">1.2.1.12</ecNumber>
    </recommendedName>
    <alternativeName>
        <fullName evidence="2">NAD-dependent glyceraldehyde-3-phosphate dehydrogenase</fullName>
    </alternativeName>
</protein>
<accession>P64181</accession>
<accession>Q99TH5</accession>
<sequence>MSTNIAINGMGRIGRMVLRIALQNKNLNVVAINASYPPETIAHLINYDTTHGKYNLKVEPIENGLQVGDHKIKLVADRNPENLPWKELDIDIAIDATGKFNHGDKAIAHIKAGAKKVLLTGPSKGGHVQMVVKGVNDNQLDIEAFDIFSNASCTTNCIGPVAKVLNNQFGIVNGLMTTVHAITNDQKNIDNPHKDLRRARSCNESIIPTSTGAAKALKEVLPELEGKLHGMALRVPTKNVSLVDLVVDLEKEVTAEEVNQAFENAGLEGIIEVEHQPLVSVDFNTNPNSAIIDAKSTMVMSGNKVKVIAWYDNEWGYSNRVVDVAEQIGALLTSKETVSAS</sequence>
<gene>
    <name type="primary">gapA2</name>
    <name type="synonym">gapB</name>
    <name type="ordered locus">MW1630</name>
</gene>
<evidence type="ECO:0000250" key="1">
    <source>
        <dbReference type="UniProtKB" id="P00362"/>
    </source>
</evidence>
<evidence type="ECO:0000250" key="2">
    <source>
        <dbReference type="UniProtKB" id="Q6GIL8"/>
    </source>
</evidence>
<evidence type="ECO:0000305" key="3"/>
<comment type="function">
    <text evidence="2">Catalyzes the oxidative phosphorylation of glyceraldehyde 3-phosphate (G3P) to 1,3-bisphosphoglycerate (BPG) using the cofactor NAD. The first reaction step involves the formation of a hemiacetal intermediate between G3P and a cysteine residue, and this hemiacetal intermediate is then oxidized to a thioester, with concomitant reduction of NAD to NADH. The reduced NADH is then exchanged with the second NAD, and the thioester is attacked by a nucleophilic inorganic phosphate to produce BPG.</text>
</comment>
<comment type="catalytic activity">
    <reaction evidence="2">
        <text>D-glyceraldehyde 3-phosphate + phosphate + NAD(+) = (2R)-3-phospho-glyceroyl phosphate + NADH + H(+)</text>
        <dbReference type="Rhea" id="RHEA:10300"/>
        <dbReference type="ChEBI" id="CHEBI:15378"/>
        <dbReference type="ChEBI" id="CHEBI:43474"/>
        <dbReference type="ChEBI" id="CHEBI:57540"/>
        <dbReference type="ChEBI" id="CHEBI:57604"/>
        <dbReference type="ChEBI" id="CHEBI:57945"/>
        <dbReference type="ChEBI" id="CHEBI:59776"/>
        <dbReference type="EC" id="1.2.1.12"/>
    </reaction>
</comment>
<comment type="pathway">
    <text evidence="3">Carbohydrate degradation; glycolysis; pyruvate from D-glyceraldehyde 3-phosphate: step 1/5.</text>
</comment>
<comment type="subunit">
    <text evidence="2">Homotetramer.</text>
</comment>
<comment type="subcellular location">
    <subcellularLocation>
        <location evidence="3">Cytoplasm</location>
    </subcellularLocation>
</comment>
<comment type="similarity">
    <text evidence="3">Belongs to the glyceraldehyde-3-phosphate dehydrogenase family.</text>
</comment>
<reference key="1">
    <citation type="journal article" date="2002" name="Lancet">
        <title>Genome and virulence determinants of high virulence community-acquired MRSA.</title>
        <authorList>
            <person name="Baba T."/>
            <person name="Takeuchi F."/>
            <person name="Kuroda M."/>
            <person name="Yuzawa H."/>
            <person name="Aoki K."/>
            <person name="Oguchi A."/>
            <person name="Nagai Y."/>
            <person name="Iwama N."/>
            <person name="Asano K."/>
            <person name="Naimi T."/>
            <person name="Kuroda H."/>
            <person name="Cui L."/>
            <person name="Yamamoto K."/>
            <person name="Hiramatsu K."/>
        </authorList>
    </citation>
    <scope>NUCLEOTIDE SEQUENCE [LARGE SCALE GENOMIC DNA]</scope>
    <source>
        <strain>MW2</strain>
    </source>
</reference>
<keyword id="KW-0963">Cytoplasm</keyword>
<keyword id="KW-0324">Glycolysis</keyword>
<keyword id="KW-0520">NAD</keyword>
<keyword id="KW-0547">Nucleotide-binding</keyword>
<keyword id="KW-0560">Oxidoreductase</keyword>
<name>G3P2_STAAW</name>
<feature type="chain" id="PRO_0000145696" description="Glyceraldehyde-3-phosphate dehydrogenase 2">
    <location>
        <begin position="1"/>
        <end position="341"/>
    </location>
</feature>
<feature type="active site" description="Nucleophile" evidence="2">
    <location>
        <position position="153"/>
    </location>
</feature>
<feature type="binding site" evidence="2">
    <location>
        <begin position="12"/>
        <end position="13"/>
    </location>
    <ligand>
        <name>NAD(+)</name>
        <dbReference type="ChEBI" id="CHEBI:57540"/>
    </ligand>
</feature>
<feature type="binding site" evidence="2">
    <location>
        <position position="78"/>
    </location>
    <ligand>
        <name>NAD(+)</name>
        <dbReference type="ChEBI" id="CHEBI:57540"/>
    </ligand>
</feature>
<feature type="binding site" evidence="2">
    <location>
        <position position="120"/>
    </location>
    <ligand>
        <name>NAD(+)</name>
        <dbReference type="ChEBI" id="CHEBI:57540"/>
    </ligand>
</feature>
<feature type="binding site" evidence="2">
    <location>
        <begin position="152"/>
        <end position="154"/>
    </location>
    <ligand>
        <name>D-glyceraldehyde 3-phosphate</name>
        <dbReference type="ChEBI" id="CHEBI:59776"/>
    </ligand>
</feature>
<feature type="binding site" evidence="2">
    <location>
        <position position="183"/>
    </location>
    <ligand>
        <name>D-glyceraldehyde 3-phosphate</name>
        <dbReference type="ChEBI" id="CHEBI:59776"/>
    </ligand>
</feature>
<feature type="binding site" evidence="2">
    <location>
        <position position="184"/>
    </location>
    <ligand>
        <name>NAD(+)</name>
        <dbReference type="ChEBI" id="CHEBI:57540"/>
    </ligand>
</feature>
<feature type="binding site" evidence="1">
    <location>
        <position position="198"/>
    </location>
    <ligand>
        <name>D-glyceraldehyde 3-phosphate</name>
        <dbReference type="ChEBI" id="CHEBI:59776"/>
    </ligand>
</feature>
<feature type="binding site" evidence="2">
    <location>
        <begin position="211"/>
        <end position="212"/>
    </location>
    <ligand>
        <name>D-glyceraldehyde 3-phosphate</name>
        <dbReference type="ChEBI" id="CHEBI:59776"/>
    </ligand>
</feature>
<feature type="binding site" evidence="2">
    <location>
        <position position="234"/>
    </location>
    <ligand>
        <name>D-glyceraldehyde 3-phosphate</name>
        <dbReference type="ChEBI" id="CHEBI:59776"/>
    </ligand>
</feature>
<feature type="binding site" evidence="2">
    <location>
        <position position="313"/>
    </location>
    <ligand>
        <name>NAD(+)</name>
        <dbReference type="ChEBI" id="CHEBI:57540"/>
    </ligand>
</feature>
<feature type="site" description="Activates thiol group during catalysis" evidence="2">
    <location>
        <position position="180"/>
    </location>
</feature>
<organism>
    <name type="scientific">Staphylococcus aureus (strain MW2)</name>
    <dbReference type="NCBI Taxonomy" id="196620"/>
    <lineage>
        <taxon>Bacteria</taxon>
        <taxon>Bacillati</taxon>
        <taxon>Bacillota</taxon>
        <taxon>Bacilli</taxon>
        <taxon>Bacillales</taxon>
        <taxon>Staphylococcaceae</taxon>
        <taxon>Staphylococcus</taxon>
    </lineage>
</organism>
<dbReference type="EC" id="1.2.1.12" evidence="2"/>
<dbReference type="EMBL" id="BA000033">
    <property type="protein sequence ID" value="BAB95495.1"/>
    <property type="molecule type" value="Genomic_DNA"/>
</dbReference>
<dbReference type="SMR" id="P64181"/>
<dbReference type="KEGG" id="sam:MW1630"/>
<dbReference type="HOGENOM" id="CLU_030140_0_2_9"/>
<dbReference type="UniPathway" id="UPA00109">
    <property type="reaction ID" value="UER00184"/>
</dbReference>
<dbReference type="GO" id="GO:0005737">
    <property type="term" value="C:cytoplasm"/>
    <property type="evidence" value="ECO:0007669"/>
    <property type="project" value="UniProtKB-SubCell"/>
</dbReference>
<dbReference type="GO" id="GO:0004365">
    <property type="term" value="F:glyceraldehyde-3-phosphate dehydrogenase (NAD+) (phosphorylating) activity"/>
    <property type="evidence" value="ECO:0000250"/>
    <property type="project" value="UniProtKB"/>
</dbReference>
<dbReference type="GO" id="GO:0051287">
    <property type="term" value="F:NAD binding"/>
    <property type="evidence" value="ECO:0000250"/>
    <property type="project" value="UniProtKB"/>
</dbReference>
<dbReference type="GO" id="GO:0050661">
    <property type="term" value="F:NADP binding"/>
    <property type="evidence" value="ECO:0007669"/>
    <property type="project" value="InterPro"/>
</dbReference>
<dbReference type="GO" id="GO:0006006">
    <property type="term" value="P:glucose metabolic process"/>
    <property type="evidence" value="ECO:0007669"/>
    <property type="project" value="InterPro"/>
</dbReference>
<dbReference type="GO" id="GO:0006096">
    <property type="term" value="P:glycolytic process"/>
    <property type="evidence" value="ECO:0007669"/>
    <property type="project" value="UniProtKB-UniPathway"/>
</dbReference>
<dbReference type="CDD" id="cd18126">
    <property type="entry name" value="GAPDH_I_C"/>
    <property type="match status" value="1"/>
</dbReference>
<dbReference type="CDD" id="cd05214">
    <property type="entry name" value="GAPDH_I_N"/>
    <property type="match status" value="1"/>
</dbReference>
<dbReference type="FunFam" id="3.30.360.10:FF:000002">
    <property type="entry name" value="Glyceraldehyde-3-phosphate dehydrogenase"/>
    <property type="match status" value="1"/>
</dbReference>
<dbReference type="FunFam" id="3.40.50.720:FF:000001">
    <property type="entry name" value="Glyceraldehyde-3-phosphate dehydrogenase"/>
    <property type="match status" value="1"/>
</dbReference>
<dbReference type="Gene3D" id="3.30.360.10">
    <property type="entry name" value="Dihydrodipicolinate Reductase, domain 2"/>
    <property type="match status" value="1"/>
</dbReference>
<dbReference type="Gene3D" id="3.40.50.720">
    <property type="entry name" value="NAD(P)-binding Rossmann-like Domain"/>
    <property type="match status" value="1"/>
</dbReference>
<dbReference type="InterPro" id="IPR020831">
    <property type="entry name" value="GlycerAld/Erythrose_P_DH"/>
</dbReference>
<dbReference type="InterPro" id="IPR020830">
    <property type="entry name" value="GlycerAld_3-P_DH_AS"/>
</dbReference>
<dbReference type="InterPro" id="IPR020829">
    <property type="entry name" value="GlycerAld_3-P_DH_cat"/>
</dbReference>
<dbReference type="InterPro" id="IPR020828">
    <property type="entry name" value="GlycerAld_3-P_DH_NAD(P)-bd"/>
</dbReference>
<dbReference type="InterPro" id="IPR006424">
    <property type="entry name" value="Glyceraldehyde-3-P_DH_1"/>
</dbReference>
<dbReference type="InterPro" id="IPR036291">
    <property type="entry name" value="NAD(P)-bd_dom_sf"/>
</dbReference>
<dbReference type="NCBIfam" id="TIGR01534">
    <property type="entry name" value="GAPDH-I"/>
    <property type="match status" value="1"/>
</dbReference>
<dbReference type="PANTHER" id="PTHR43148">
    <property type="entry name" value="GLYCERALDEHYDE-3-PHOSPHATE DEHYDROGENASE 2"/>
    <property type="match status" value="1"/>
</dbReference>
<dbReference type="Pfam" id="PF02800">
    <property type="entry name" value="Gp_dh_C"/>
    <property type="match status" value="1"/>
</dbReference>
<dbReference type="Pfam" id="PF00044">
    <property type="entry name" value="Gp_dh_N"/>
    <property type="match status" value="1"/>
</dbReference>
<dbReference type="PIRSF" id="PIRSF000149">
    <property type="entry name" value="GAP_DH"/>
    <property type="match status" value="1"/>
</dbReference>
<dbReference type="PRINTS" id="PR00078">
    <property type="entry name" value="G3PDHDRGNASE"/>
</dbReference>
<dbReference type="SMART" id="SM00846">
    <property type="entry name" value="Gp_dh_N"/>
    <property type="match status" value="1"/>
</dbReference>
<dbReference type="SUPFAM" id="SSF55347">
    <property type="entry name" value="Glyceraldehyde-3-phosphate dehydrogenase-like, C-terminal domain"/>
    <property type="match status" value="1"/>
</dbReference>
<dbReference type="SUPFAM" id="SSF51735">
    <property type="entry name" value="NAD(P)-binding Rossmann-fold domains"/>
    <property type="match status" value="1"/>
</dbReference>
<dbReference type="PROSITE" id="PS00071">
    <property type="entry name" value="GAPDH"/>
    <property type="match status" value="1"/>
</dbReference>